<keyword id="KW-0002">3D-structure</keyword>
<keyword id="KW-0004">4Fe-4S</keyword>
<keyword id="KW-0025">Alternative splicing</keyword>
<keyword id="KW-0225">Disease variant</keyword>
<keyword id="KW-0249">Electron transport</keyword>
<keyword id="KW-0379">Hydroxylation</keyword>
<keyword id="KW-0408">Iron</keyword>
<keyword id="KW-0411">Iron-sulfur</keyword>
<keyword id="KW-0431">Leigh syndrome</keyword>
<keyword id="KW-0472">Membrane</keyword>
<keyword id="KW-0479">Metal-binding</keyword>
<keyword id="KW-0496">Mitochondrion</keyword>
<keyword id="KW-0999">Mitochondrion inner membrane</keyword>
<keyword id="KW-0520">NAD</keyword>
<keyword id="KW-0560">Oxidoreductase</keyword>
<keyword id="KW-1274">Primary mitochondrial disease</keyword>
<keyword id="KW-1267">Proteomics identification</keyword>
<keyword id="KW-1185">Reference proteome</keyword>
<keyword id="KW-0679">Respiratory chain</keyword>
<keyword id="KW-0809">Transit peptide</keyword>
<keyword id="KW-1278">Translocase</keyword>
<keyword id="KW-0813">Transport</keyword>
<keyword id="KW-0830">Ubiquinone</keyword>
<sequence length="213" mass="23564">MAVLSAPGLRGFRILGLRSSVGPAVQARGVHQSVATDGPSSTQPALPKARAVAPKPSSRGEYVVAKLDDLVNWARRSSLWPMTFGLACCAVEMMHMAAPRYDMDRFGVVFRASPRQSDVMIVAGTLTNKMAPALRKVYDQMPEPRYVVSMGSCANGGGYYHYSYSVVRGCDRIVPVDIYIPGCPPTAEALLYGILQLQRKIKRERRLQIWYRR</sequence>
<feature type="transit peptide" description="Mitochondrion" evidence="1">
    <location>
        <begin position="1"/>
        <end position="38"/>
    </location>
</feature>
<feature type="chain" id="PRO_0000020027" description="NADH dehydrogenase [ubiquinone] iron-sulfur protein 7, mitochondrial">
    <location>
        <begin position="39"/>
        <end position="213"/>
    </location>
</feature>
<feature type="region of interest" description="Disordered" evidence="3">
    <location>
        <begin position="31"/>
        <end position="53"/>
    </location>
</feature>
<feature type="compositionally biased region" description="Polar residues" evidence="3">
    <location>
        <begin position="33"/>
        <end position="44"/>
    </location>
</feature>
<feature type="binding site" evidence="2">
    <location>
        <position position="88"/>
    </location>
    <ligand>
        <name>[4Fe-4S] cluster</name>
        <dbReference type="ChEBI" id="CHEBI:49883"/>
    </ligand>
</feature>
<feature type="binding site" evidence="2">
    <location>
        <position position="89"/>
    </location>
    <ligand>
        <name>[4Fe-4S] cluster</name>
        <dbReference type="ChEBI" id="CHEBI:49883"/>
    </ligand>
</feature>
<feature type="binding site" evidence="2">
    <location>
        <position position="153"/>
    </location>
    <ligand>
        <name>[4Fe-4S] cluster</name>
        <dbReference type="ChEBI" id="CHEBI:49883"/>
    </ligand>
</feature>
<feature type="binding site" evidence="2">
    <location>
        <position position="183"/>
    </location>
    <ligand>
        <name>[4Fe-4S] cluster</name>
        <dbReference type="ChEBI" id="CHEBI:49883"/>
    </ligand>
</feature>
<feature type="modified residue" description="Hydroxyarginine" evidence="9">
    <location>
        <position position="111"/>
    </location>
</feature>
<feature type="splice variant" id="VSP_057067" description="In isoform 2." evidence="10">
    <original>CPPTAEALLYGILQLQRKIKRERRLQIWYRR</original>
    <variation>RAGTAPPTRELETGPAPHGARRPL</variation>
    <location>
        <begin position="183"/>
        <end position="213"/>
    </location>
</feature>
<feature type="sequence variant" id="VAR_014482" description="In dbSNP:rs1142530." evidence="7">
    <original>P</original>
    <variation>L</variation>
    <location>
        <position position="23"/>
    </location>
</feature>
<feature type="sequence variant" id="VAR_008848" description="In MC1DN3; dbSNP:rs104894705." evidence="4 5">
    <original>V</original>
    <variation>M</variation>
    <location>
        <position position="122"/>
    </location>
</feature>
<feature type="sequence variant" id="VAR_084360" description="Found in a patient with Leigh syndrome; uncertain significance; decrease in enzyme activity; dbSNP:rs121434479." evidence="8">
    <original>R</original>
    <variation>H</variation>
    <location>
        <position position="145"/>
    </location>
</feature>
<feature type="helix" evidence="14">
    <location>
        <begin position="60"/>
        <end position="76"/>
    </location>
</feature>
<feature type="helix" evidence="14">
    <location>
        <begin position="90"/>
        <end position="96"/>
    </location>
</feature>
<feature type="turn" evidence="14">
    <location>
        <begin position="99"/>
        <end position="101"/>
    </location>
</feature>
<feature type="helix" evidence="14">
    <location>
        <begin position="103"/>
        <end position="106"/>
    </location>
</feature>
<feature type="turn" evidence="14">
    <location>
        <begin position="114"/>
        <end position="116"/>
    </location>
</feature>
<feature type="strand" evidence="14">
    <location>
        <begin position="119"/>
        <end position="121"/>
    </location>
</feature>
<feature type="turn" evidence="14">
    <location>
        <begin position="128"/>
        <end position="130"/>
    </location>
</feature>
<feature type="helix" evidence="14">
    <location>
        <begin position="131"/>
        <end position="140"/>
    </location>
</feature>
<feature type="helix" evidence="14">
    <location>
        <begin position="151"/>
        <end position="156"/>
    </location>
</feature>
<feature type="helix" evidence="14">
    <location>
        <begin position="158"/>
        <end position="160"/>
    </location>
</feature>
<feature type="strand" evidence="14">
    <location>
        <begin position="162"/>
        <end position="166"/>
    </location>
</feature>
<feature type="helix" evidence="14">
    <location>
        <begin position="170"/>
        <end position="172"/>
    </location>
</feature>
<feature type="helix" evidence="14">
    <location>
        <begin position="187"/>
        <end position="202"/>
    </location>
</feature>
<feature type="helix" evidence="14">
    <location>
        <begin position="206"/>
        <end position="211"/>
    </location>
</feature>
<comment type="function">
    <text evidence="8">Core subunit of the mitochondrial membrane respiratory chain NADH dehydrogenase (Complex I) which catalyzes electron transfer from NADH through the respiratory chain, using ubiquinone as an electron acceptor (PubMed:17275378). Essential for the catalytic activity of complex I (PubMed:17275378).</text>
</comment>
<comment type="catalytic activity">
    <reaction evidence="8">
        <text>a ubiquinone + NADH + 5 H(+)(in) = a ubiquinol + NAD(+) + 4 H(+)(out)</text>
        <dbReference type="Rhea" id="RHEA:29091"/>
        <dbReference type="Rhea" id="RHEA-COMP:9565"/>
        <dbReference type="Rhea" id="RHEA-COMP:9566"/>
        <dbReference type="ChEBI" id="CHEBI:15378"/>
        <dbReference type="ChEBI" id="CHEBI:16389"/>
        <dbReference type="ChEBI" id="CHEBI:17976"/>
        <dbReference type="ChEBI" id="CHEBI:57540"/>
        <dbReference type="ChEBI" id="CHEBI:57945"/>
        <dbReference type="EC" id="7.1.1.2"/>
    </reaction>
</comment>
<comment type="cofactor">
    <cofactor evidence="12">
        <name>[4Fe-4S] cluster</name>
        <dbReference type="ChEBI" id="CHEBI:49883"/>
    </cofactor>
    <text evidence="12">Binds 1 [4Fe-4S] cluster.</text>
</comment>
<comment type="subunit">
    <text evidence="1 6">Core subunit of respiratory chain NADH dehydrogenase (Complex I) which is composed of 45 different subunits (PubMed:12611891). This is a component of the iron-sulfur (IP) fragment of the enzyme (By similarity).</text>
</comment>
<comment type="interaction">
    <interactant intactId="EBI-719652">
        <id>O75251</id>
    </interactant>
    <interactant intactId="EBI-1055254">
        <id>Q8WXH2</id>
        <label>JPH3</label>
    </interactant>
    <organismsDiffer>false</organismsDiffer>
    <experiments>3</experiments>
</comment>
<comment type="subcellular location">
    <subcellularLocation>
        <location evidence="13">Mitochondrion inner membrane</location>
        <topology evidence="1">Peripheral membrane protein</topology>
        <orientation evidence="1">Matrix side</orientation>
    </subcellularLocation>
</comment>
<comment type="alternative products">
    <event type="alternative splicing"/>
    <isoform>
        <id>O75251-1</id>
        <name>1</name>
        <sequence type="displayed"/>
    </isoform>
    <isoform>
        <id>O75251-2</id>
        <name>2</name>
        <sequence type="described" ref="VSP_057067"/>
    </isoform>
</comment>
<comment type="PTM">
    <text evidence="9">Hydroxylated at Arg-111 by NDUFAF5 early in the pathway of assembly of complex I, before the formation of the juncture between peripheral and membrane arms.</text>
</comment>
<comment type="disease" evidence="4 5">
    <disease id="DI-05402">
        <name>Mitochondrial complex I deficiency, nuclear type 3</name>
        <acronym>MC1DN3</acronym>
        <description>A form of mitochondrial complex I deficiency, the most common biochemical signature of mitochondrial disorders, a group of highly heterogeneous conditions characterized by defective oxidative phosphorylation, which collectively affects 1 in 5-10000 live births. Clinical disorders have variable severity, ranging from lethal neonatal disease to adult-onset neurodegenerative disorders. Phenotypes include macrocephaly with progressive leukodystrophy, non-specific encephalopathy, cardiomyopathy, myopathy, liver disease, Leigh syndrome, Leber hereditary optic neuropathy, and some forms of Parkinson disease. MC1DN3 transmission pattern is consistent with autosomal recessive inheritance.</description>
        <dbReference type="MIM" id="618224"/>
    </disease>
    <text>The disease is caused by variants affecting the gene represented in this entry.</text>
</comment>
<comment type="similarity">
    <text evidence="12">Belongs to the complex I 20 kDa subunit family.</text>
</comment>
<comment type="sequence caution" evidence="12">
    <conflict type="erroneous gene model prediction">
        <sequence resource="EMBL-CDS" id="AAC27669"/>
    </conflict>
</comment>
<gene>
    <name type="primary">NDUFS7</name>
</gene>
<protein>
    <recommendedName>
        <fullName>NADH dehydrogenase [ubiquinone] iron-sulfur protein 7, mitochondrial</fullName>
        <ecNumber evidence="8">7.1.1.2</ecNumber>
    </recommendedName>
    <alternativeName>
        <fullName>Complex I-20kD</fullName>
        <shortName>CI-20kD</shortName>
    </alternativeName>
    <alternativeName>
        <fullName>NADH-ubiquinone oxidoreductase 20 kDa subunit</fullName>
    </alternativeName>
    <alternativeName>
        <fullName evidence="11">PSST subunit</fullName>
    </alternativeName>
</protein>
<name>NDUS7_HUMAN</name>
<dbReference type="EC" id="7.1.1.2" evidence="8"/>
<dbReference type="EMBL" id="AK091623">
    <property type="protein sequence ID" value="BAG52394.1"/>
    <property type="molecule type" value="mRNA"/>
</dbReference>
<dbReference type="EMBL" id="AC005329">
    <property type="protein sequence ID" value="AAC27669.1"/>
    <property type="status" value="ALT_SEQ"/>
    <property type="molecule type" value="Genomic_DNA"/>
</dbReference>
<dbReference type="EMBL" id="BC001715">
    <property type="protein sequence ID" value="AAH01715.2"/>
    <property type="molecule type" value="mRNA"/>
</dbReference>
<dbReference type="EMBL" id="BC005954">
    <property type="protein sequence ID" value="AAH05954.1"/>
    <property type="molecule type" value="mRNA"/>
</dbReference>
<dbReference type="EMBL" id="BC111517">
    <property type="protein sequence ID" value="AAI11518.1"/>
    <property type="molecule type" value="mRNA"/>
</dbReference>
<dbReference type="CCDS" id="CCDS12063.1">
    <molecule id="O75251-1"/>
</dbReference>
<dbReference type="RefSeq" id="NP_077718.3">
    <molecule id="O75251-1"/>
    <property type="nucleotide sequence ID" value="NM_024407.4"/>
</dbReference>
<dbReference type="PDB" id="5XTB">
    <property type="method" value="EM"/>
    <property type="resolution" value="3.40 A"/>
    <property type="chains" value="C=58-213"/>
</dbReference>
<dbReference type="PDB" id="5XTD">
    <property type="method" value="EM"/>
    <property type="resolution" value="3.70 A"/>
    <property type="chains" value="C=58-213"/>
</dbReference>
<dbReference type="PDB" id="5XTH">
    <property type="method" value="EM"/>
    <property type="resolution" value="3.90 A"/>
    <property type="chains" value="C=58-213"/>
</dbReference>
<dbReference type="PDB" id="5XTI">
    <property type="method" value="EM"/>
    <property type="resolution" value="17.40 A"/>
    <property type="chains" value="BC/C=58-213"/>
</dbReference>
<dbReference type="PDBsum" id="5XTB"/>
<dbReference type="PDBsum" id="5XTD"/>
<dbReference type="PDBsum" id="5XTH"/>
<dbReference type="PDBsum" id="5XTI"/>
<dbReference type="SMR" id="O75251"/>
<dbReference type="BioGRID" id="131889">
    <property type="interactions" value="318"/>
</dbReference>
<dbReference type="ComplexPortal" id="CPX-577">
    <property type="entry name" value="Mitochondrial respiratory chain complex I"/>
</dbReference>
<dbReference type="CORUM" id="O75251"/>
<dbReference type="FunCoup" id="O75251">
    <property type="interactions" value="968"/>
</dbReference>
<dbReference type="IntAct" id="O75251">
    <property type="interactions" value="142"/>
</dbReference>
<dbReference type="MINT" id="O75251"/>
<dbReference type="STRING" id="9606.ENSP00000233627"/>
<dbReference type="BindingDB" id="O75251"/>
<dbReference type="ChEMBL" id="CHEMBL2363065"/>
<dbReference type="DrugBank" id="DB00997">
    <property type="generic name" value="Doxorubicin"/>
</dbReference>
<dbReference type="DrugBank" id="DB00157">
    <property type="generic name" value="NADH"/>
</dbReference>
<dbReference type="DrugCentral" id="O75251"/>
<dbReference type="GlyGen" id="O75251">
    <property type="glycosylation" value="1 site, 1 O-linked glycan (1 site)"/>
</dbReference>
<dbReference type="iPTMnet" id="O75251"/>
<dbReference type="MetOSite" id="O75251"/>
<dbReference type="PhosphoSitePlus" id="O75251"/>
<dbReference type="SwissPalm" id="O75251"/>
<dbReference type="BioMuta" id="NDUFS7"/>
<dbReference type="jPOST" id="O75251"/>
<dbReference type="MassIVE" id="O75251"/>
<dbReference type="PaxDb" id="9606-ENSP00000233627"/>
<dbReference type="PeptideAtlas" id="O75251"/>
<dbReference type="ProteomicsDB" id="3604"/>
<dbReference type="ProteomicsDB" id="49873">
    <molecule id="O75251-1"/>
</dbReference>
<dbReference type="Pumba" id="O75251"/>
<dbReference type="TopDownProteomics" id="O75251-1">
    <molecule id="O75251-1"/>
</dbReference>
<dbReference type="Antibodypedia" id="22663">
    <property type="antibodies" value="157 antibodies from 30 providers"/>
</dbReference>
<dbReference type="DNASU" id="374291"/>
<dbReference type="Ensembl" id="ENST00000233627.14">
    <molecule id="O75251-1"/>
    <property type="protein sequence ID" value="ENSP00000233627.9"/>
    <property type="gene ID" value="ENSG00000115286.21"/>
</dbReference>
<dbReference type="Ensembl" id="ENST00000313408.11">
    <molecule id="O75251-2"/>
    <property type="protein sequence ID" value="ENSP00000364262.5"/>
    <property type="gene ID" value="ENSG00000115286.21"/>
</dbReference>
<dbReference type="Ensembl" id="ENST00000546283.5">
    <molecule id="O75251-2"/>
    <property type="protein sequence ID" value="ENSP00000440348.1"/>
    <property type="gene ID" value="ENSG00000115286.21"/>
</dbReference>
<dbReference type="GeneID" id="374291"/>
<dbReference type="KEGG" id="hsa:374291"/>
<dbReference type="MANE-Select" id="ENST00000233627.14">
    <property type="protein sequence ID" value="ENSP00000233627.9"/>
    <property type="RefSeq nucleotide sequence ID" value="NM_024407.5"/>
    <property type="RefSeq protein sequence ID" value="NP_077718.3"/>
</dbReference>
<dbReference type="UCSC" id="uc060qzv.1">
    <molecule id="O75251-1"/>
    <property type="organism name" value="human"/>
</dbReference>
<dbReference type="AGR" id="HGNC:7714"/>
<dbReference type="CTD" id="374291"/>
<dbReference type="DisGeNET" id="374291"/>
<dbReference type="GeneCards" id="NDUFS7"/>
<dbReference type="GeneReviews" id="NDUFS7"/>
<dbReference type="HGNC" id="HGNC:7714">
    <property type="gene designation" value="NDUFS7"/>
</dbReference>
<dbReference type="HPA" id="ENSG00000115286">
    <property type="expression patterns" value="Tissue enhanced (skeletal)"/>
</dbReference>
<dbReference type="MalaCards" id="NDUFS7"/>
<dbReference type="MIM" id="601825">
    <property type="type" value="gene"/>
</dbReference>
<dbReference type="MIM" id="618224">
    <property type="type" value="phenotype"/>
</dbReference>
<dbReference type="neXtProt" id="NX_O75251"/>
<dbReference type="OpenTargets" id="ENSG00000115286"/>
<dbReference type="Orphanet" id="2609">
    <property type="disease" value="Isolated complex I deficiency"/>
</dbReference>
<dbReference type="PharmGKB" id="PA31524"/>
<dbReference type="VEuPathDB" id="HostDB:ENSG00000115286"/>
<dbReference type="eggNOG" id="KOG1687">
    <property type="taxonomic scope" value="Eukaryota"/>
</dbReference>
<dbReference type="GeneTree" id="ENSGT00390000006565"/>
<dbReference type="HOGENOM" id="CLU_055737_1_2_1"/>
<dbReference type="InParanoid" id="O75251"/>
<dbReference type="OMA" id="GCGGIEM"/>
<dbReference type="OrthoDB" id="268400at2759"/>
<dbReference type="PAN-GO" id="O75251">
    <property type="GO annotations" value="6 GO annotations based on evolutionary models"/>
</dbReference>
<dbReference type="PhylomeDB" id="O75251"/>
<dbReference type="TreeFam" id="TF312859"/>
<dbReference type="BioCyc" id="MetaCyc:HS03864-MONOMER"/>
<dbReference type="PathwayCommons" id="O75251"/>
<dbReference type="Reactome" id="R-HSA-611105">
    <property type="pathway name" value="Respiratory electron transport"/>
</dbReference>
<dbReference type="Reactome" id="R-HSA-6799198">
    <property type="pathway name" value="Complex I biogenesis"/>
</dbReference>
<dbReference type="SignaLink" id="O75251"/>
<dbReference type="SIGNOR" id="O75251"/>
<dbReference type="BioGRID-ORCS" id="374291">
    <property type="hits" value="174 hits in 1162 CRISPR screens"/>
</dbReference>
<dbReference type="ChiTaRS" id="NDUFS7">
    <property type="organism name" value="human"/>
</dbReference>
<dbReference type="GeneWiki" id="NDUFS7"/>
<dbReference type="GenomeRNAi" id="374291"/>
<dbReference type="Pharos" id="O75251">
    <property type="development level" value="Tclin"/>
</dbReference>
<dbReference type="PRO" id="PR:O75251"/>
<dbReference type="Proteomes" id="UP000005640">
    <property type="component" value="Chromosome 19"/>
</dbReference>
<dbReference type="RNAct" id="O75251">
    <property type="molecule type" value="protein"/>
</dbReference>
<dbReference type="Bgee" id="ENSG00000115286">
    <property type="expression patterns" value="Expressed in hindlimb stylopod muscle and 192 other cell types or tissues"/>
</dbReference>
<dbReference type="ExpressionAtlas" id="O75251">
    <property type="expression patterns" value="baseline and differential"/>
</dbReference>
<dbReference type="GO" id="GO:0005743">
    <property type="term" value="C:mitochondrial inner membrane"/>
    <property type="evidence" value="ECO:0000314"/>
    <property type="project" value="ComplexPortal"/>
</dbReference>
<dbReference type="GO" id="GO:0005759">
    <property type="term" value="C:mitochondrial matrix"/>
    <property type="evidence" value="ECO:0000304"/>
    <property type="project" value="Reactome"/>
</dbReference>
<dbReference type="GO" id="GO:0005739">
    <property type="term" value="C:mitochondrion"/>
    <property type="evidence" value="ECO:0006056"/>
    <property type="project" value="FlyBase"/>
</dbReference>
<dbReference type="GO" id="GO:0043025">
    <property type="term" value="C:neuronal cell body"/>
    <property type="evidence" value="ECO:0007669"/>
    <property type="project" value="Ensembl"/>
</dbReference>
<dbReference type="GO" id="GO:0045271">
    <property type="term" value="C:respiratory chain complex I"/>
    <property type="evidence" value="ECO:0000314"/>
    <property type="project" value="UniProtKB"/>
</dbReference>
<dbReference type="GO" id="GO:0097060">
    <property type="term" value="C:synaptic membrane"/>
    <property type="evidence" value="ECO:0007669"/>
    <property type="project" value="Ensembl"/>
</dbReference>
<dbReference type="GO" id="GO:0051539">
    <property type="term" value="F:4 iron, 4 sulfur cluster binding"/>
    <property type="evidence" value="ECO:0007669"/>
    <property type="project" value="UniProtKB-KW"/>
</dbReference>
<dbReference type="GO" id="GO:0046872">
    <property type="term" value="F:metal ion binding"/>
    <property type="evidence" value="ECO:0007669"/>
    <property type="project" value="UniProtKB-KW"/>
</dbReference>
<dbReference type="GO" id="GO:0004497">
    <property type="term" value="F:monooxygenase activity"/>
    <property type="evidence" value="ECO:0000314"/>
    <property type="project" value="UniProtKB"/>
</dbReference>
<dbReference type="GO" id="GO:0008137">
    <property type="term" value="F:NADH dehydrogenase (ubiquinone) activity"/>
    <property type="evidence" value="ECO:0000315"/>
    <property type="project" value="UniProtKB"/>
</dbReference>
<dbReference type="GO" id="GO:0016655">
    <property type="term" value="F:oxidoreductase activity, acting on NAD(P)H, quinone or similar compound as acceptor"/>
    <property type="evidence" value="ECO:0000303"/>
    <property type="project" value="UniProtKB"/>
</dbReference>
<dbReference type="GO" id="GO:0002020">
    <property type="term" value="F:protease binding"/>
    <property type="evidence" value="ECO:0007669"/>
    <property type="project" value="Ensembl"/>
</dbReference>
<dbReference type="GO" id="GO:0048038">
    <property type="term" value="F:quinone binding"/>
    <property type="evidence" value="ECO:0007669"/>
    <property type="project" value="InterPro"/>
</dbReference>
<dbReference type="GO" id="GO:0009060">
    <property type="term" value="P:aerobic respiration"/>
    <property type="evidence" value="ECO:0000318"/>
    <property type="project" value="GO_Central"/>
</dbReference>
<dbReference type="GO" id="GO:0015990">
    <property type="term" value="P:electron transport coupled proton transport"/>
    <property type="evidence" value="ECO:0000318"/>
    <property type="project" value="GO_Central"/>
</dbReference>
<dbReference type="GO" id="GO:0006120">
    <property type="term" value="P:mitochondrial electron transport, NADH to ubiquinone"/>
    <property type="evidence" value="ECO:0000315"/>
    <property type="project" value="UniProtKB"/>
</dbReference>
<dbReference type="GO" id="GO:0032981">
    <property type="term" value="P:mitochondrial respiratory chain complex I assembly"/>
    <property type="evidence" value="ECO:0000315"/>
    <property type="project" value="UniProtKB"/>
</dbReference>
<dbReference type="GO" id="GO:0042776">
    <property type="term" value="P:proton motive force-driven mitochondrial ATP synthesis"/>
    <property type="evidence" value="ECO:0000303"/>
    <property type="project" value="ComplexPortal"/>
</dbReference>
<dbReference type="FunFam" id="3.40.50.12280:FF:000001">
    <property type="entry name" value="NADH-quinone oxidoreductase subunit B 2"/>
    <property type="match status" value="1"/>
</dbReference>
<dbReference type="Gene3D" id="3.40.50.12280">
    <property type="match status" value="1"/>
</dbReference>
<dbReference type="HAMAP" id="MF_01356">
    <property type="entry name" value="NDH1_NuoB"/>
    <property type="match status" value="1"/>
</dbReference>
<dbReference type="InterPro" id="IPR006137">
    <property type="entry name" value="NADH_UbQ_OxRdtase-like_20kDa"/>
</dbReference>
<dbReference type="InterPro" id="IPR006138">
    <property type="entry name" value="NADH_UQ_OxRdtase_20Kd_su"/>
</dbReference>
<dbReference type="NCBIfam" id="TIGR01957">
    <property type="entry name" value="nuoB_fam"/>
    <property type="match status" value="1"/>
</dbReference>
<dbReference type="NCBIfam" id="NF005012">
    <property type="entry name" value="PRK06411.1"/>
    <property type="match status" value="1"/>
</dbReference>
<dbReference type="PANTHER" id="PTHR11995">
    <property type="entry name" value="NADH DEHYDROGENASE"/>
    <property type="match status" value="1"/>
</dbReference>
<dbReference type="PANTHER" id="PTHR11995:SF22">
    <property type="entry name" value="NADH DEHYDROGENASE [UBIQUINONE] IRON-SULFUR PROTEIN 7, MITOCHONDRIAL"/>
    <property type="match status" value="1"/>
</dbReference>
<dbReference type="Pfam" id="PF01058">
    <property type="entry name" value="Oxidored_q6"/>
    <property type="match status" value="1"/>
</dbReference>
<dbReference type="SUPFAM" id="SSF56770">
    <property type="entry name" value="HydA/Nqo6-like"/>
    <property type="match status" value="1"/>
</dbReference>
<dbReference type="PROSITE" id="PS01150">
    <property type="entry name" value="COMPLEX1_20K"/>
    <property type="match status" value="1"/>
</dbReference>
<accession>O75251</accession>
<accession>B3KRI2</accession>
<accession>Q2T9H7</accession>
<accession>Q9BV17</accession>
<proteinExistence type="evidence at protein level"/>
<evidence type="ECO:0000250" key="1">
    <source>
        <dbReference type="UniProtKB" id="P42026"/>
    </source>
</evidence>
<evidence type="ECO:0000255" key="2"/>
<evidence type="ECO:0000256" key="3">
    <source>
        <dbReference type="SAM" id="MobiDB-lite"/>
    </source>
</evidence>
<evidence type="ECO:0000269" key="4">
    <source>
    </source>
</evidence>
<evidence type="ECO:0000269" key="5">
    <source>
    </source>
</evidence>
<evidence type="ECO:0000269" key="6">
    <source>
    </source>
</evidence>
<evidence type="ECO:0000269" key="7">
    <source>
    </source>
</evidence>
<evidence type="ECO:0000269" key="8">
    <source>
    </source>
</evidence>
<evidence type="ECO:0000269" key="9">
    <source>
    </source>
</evidence>
<evidence type="ECO:0000303" key="10">
    <source>
    </source>
</evidence>
<evidence type="ECO:0000303" key="11">
    <source>
    </source>
</evidence>
<evidence type="ECO:0000305" key="12"/>
<evidence type="ECO:0000305" key="13">
    <source>
    </source>
</evidence>
<evidence type="ECO:0007829" key="14">
    <source>
        <dbReference type="PDB" id="5XTB"/>
    </source>
</evidence>
<organism>
    <name type="scientific">Homo sapiens</name>
    <name type="common">Human</name>
    <dbReference type="NCBI Taxonomy" id="9606"/>
    <lineage>
        <taxon>Eukaryota</taxon>
        <taxon>Metazoa</taxon>
        <taxon>Chordata</taxon>
        <taxon>Craniata</taxon>
        <taxon>Vertebrata</taxon>
        <taxon>Euteleostomi</taxon>
        <taxon>Mammalia</taxon>
        <taxon>Eutheria</taxon>
        <taxon>Euarchontoglires</taxon>
        <taxon>Primates</taxon>
        <taxon>Haplorrhini</taxon>
        <taxon>Catarrhini</taxon>
        <taxon>Hominidae</taxon>
        <taxon>Homo</taxon>
    </lineage>
</organism>
<reference key="1">
    <citation type="journal article" date="1996" name="Genomics">
        <title>Assignment of the PSST subunit gene of human mitochondrial complex I to chromosome 19p13.</title>
        <authorList>
            <person name="Hyslop S.J."/>
            <person name="Duncan A.M.V."/>
            <person name="Pitkanen S."/>
            <person name="Robinson B.H."/>
        </authorList>
    </citation>
    <scope>NUCLEOTIDE SEQUENCE [MRNA] (ISOFORM 1)</scope>
</reference>
<reference key="2">
    <citation type="journal article" date="2004" name="Nat. Genet.">
        <title>Complete sequencing and characterization of 21,243 full-length human cDNAs.</title>
        <authorList>
            <person name="Ota T."/>
            <person name="Suzuki Y."/>
            <person name="Nishikawa T."/>
            <person name="Otsuki T."/>
            <person name="Sugiyama T."/>
            <person name="Irie R."/>
            <person name="Wakamatsu A."/>
            <person name="Hayashi K."/>
            <person name="Sato H."/>
            <person name="Nagai K."/>
            <person name="Kimura K."/>
            <person name="Makita H."/>
            <person name="Sekine M."/>
            <person name="Obayashi M."/>
            <person name="Nishi T."/>
            <person name="Shibahara T."/>
            <person name="Tanaka T."/>
            <person name="Ishii S."/>
            <person name="Yamamoto J."/>
            <person name="Saito K."/>
            <person name="Kawai Y."/>
            <person name="Isono Y."/>
            <person name="Nakamura Y."/>
            <person name="Nagahari K."/>
            <person name="Murakami K."/>
            <person name="Yasuda T."/>
            <person name="Iwayanagi T."/>
            <person name="Wagatsuma M."/>
            <person name="Shiratori A."/>
            <person name="Sudo H."/>
            <person name="Hosoiri T."/>
            <person name="Kaku Y."/>
            <person name="Kodaira H."/>
            <person name="Kondo H."/>
            <person name="Sugawara M."/>
            <person name="Takahashi M."/>
            <person name="Kanda K."/>
            <person name="Yokoi T."/>
            <person name="Furuya T."/>
            <person name="Kikkawa E."/>
            <person name="Omura Y."/>
            <person name="Abe K."/>
            <person name="Kamihara K."/>
            <person name="Katsuta N."/>
            <person name="Sato K."/>
            <person name="Tanikawa M."/>
            <person name="Yamazaki M."/>
            <person name="Ninomiya K."/>
            <person name="Ishibashi T."/>
            <person name="Yamashita H."/>
            <person name="Murakawa K."/>
            <person name="Fujimori K."/>
            <person name="Tanai H."/>
            <person name="Kimata M."/>
            <person name="Watanabe M."/>
            <person name="Hiraoka S."/>
            <person name="Chiba Y."/>
            <person name="Ishida S."/>
            <person name="Ono Y."/>
            <person name="Takiguchi S."/>
            <person name="Watanabe S."/>
            <person name="Yosida M."/>
            <person name="Hotuta T."/>
            <person name="Kusano J."/>
            <person name="Kanehori K."/>
            <person name="Takahashi-Fujii A."/>
            <person name="Hara H."/>
            <person name="Tanase T.-O."/>
            <person name="Nomura Y."/>
            <person name="Togiya S."/>
            <person name="Komai F."/>
            <person name="Hara R."/>
            <person name="Takeuchi K."/>
            <person name="Arita M."/>
            <person name="Imose N."/>
            <person name="Musashino K."/>
            <person name="Yuuki H."/>
            <person name="Oshima A."/>
            <person name="Sasaki N."/>
            <person name="Aotsuka S."/>
            <person name="Yoshikawa Y."/>
            <person name="Matsunawa H."/>
            <person name="Ichihara T."/>
            <person name="Shiohata N."/>
            <person name="Sano S."/>
            <person name="Moriya S."/>
            <person name="Momiyama H."/>
            <person name="Satoh N."/>
            <person name="Takami S."/>
            <person name="Terashima Y."/>
            <person name="Suzuki O."/>
            <person name="Nakagawa S."/>
            <person name="Senoh A."/>
            <person name="Mizoguchi H."/>
            <person name="Goto Y."/>
            <person name="Shimizu F."/>
            <person name="Wakebe H."/>
            <person name="Hishigaki H."/>
            <person name="Watanabe T."/>
            <person name="Sugiyama A."/>
            <person name="Takemoto M."/>
            <person name="Kawakami B."/>
            <person name="Yamazaki M."/>
            <person name="Watanabe K."/>
            <person name="Kumagai A."/>
            <person name="Itakura S."/>
            <person name="Fukuzumi Y."/>
            <person name="Fujimori Y."/>
            <person name="Komiyama M."/>
            <person name="Tashiro H."/>
            <person name="Tanigami A."/>
            <person name="Fujiwara T."/>
            <person name="Ono T."/>
            <person name="Yamada K."/>
            <person name="Fujii Y."/>
            <person name="Ozaki K."/>
            <person name="Hirao M."/>
            <person name="Ohmori Y."/>
            <person name="Kawabata A."/>
            <person name="Hikiji T."/>
            <person name="Kobatake N."/>
            <person name="Inagaki H."/>
            <person name="Ikema Y."/>
            <person name="Okamoto S."/>
            <person name="Okitani R."/>
            <person name="Kawakami T."/>
            <person name="Noguchi S."/>
            <person name="Itoh T."/>
            <person name="Shigeta K."/>
            <person name="Senba T."/>
            <person name="Matsumura K."/>
            <person name="Nakajima Y."/>
            <person name="Mizuno T."/>
            <person name="Morinaga M."/>
            <person name="Sasaki M."/>
            <person name="Togashi T."/>
            <person name="Oyama M."/>
            <person name="Hata H."/>
            <person name="Watanabe M."/>
            <person name="Komatsu T."/>
            <person name="Mizushima-Sugano J."/>
            <person name="Satoh T."/>
            <person name="Shirai Y."/>
            <person name="Takahashi Y."/>
            <person name="Nakagawa K."/>
            <person name="Okumura K."/>
            <person name="Nagase T."/>
            <person name="Nomura N."/>
            <person name="Kikuchi H."/>
            <person name="Masuho Y."/>
            <person name="Yamashita R."/>
            <person name="Nakai K."/>
            <person name="Yada T."/>
            <person name="Nakamura Y."/>
            <person name="Ohara O."/>
            <person name="Isogai T."/>
            <person name="Sugano S."/>
        </authorList>
    </citation>
    <scope>NUCLEOTIDE SEQUENCE [LARGE SCALE MRNA] (ISOFORM 2)</scope>
    <source>
        <tissue>Brain</tissue>
    </source>
</reference>
<reference key="3">
    <citation type="journal article" date="2004" name="Nature">
        <title>The DNA sequence and biology of human chromosome 19.</title>
        <authorList>
            <person name="Grimwood J."/>
            <person name="Gordon L.A."/>
            <person name="Olsen A.S."/>
            <person name="Terry A."/>
            <person name="Schmutz J."/>
            <person name="Lamerdin J.E."/>
            <person name="Hellsten U."/>
            <person name="Goodstein D."/>
            <person name="Couronne O."/>
            <person name="Tran-Gyamfi M."/>
            <person name="Aerts A."/>
            <person name="Altherr M."/>
            <person name="Ashworth L."/>
            <person name="Bajorek E."/>
            <person name="Black S."/>
            <person name="Branscomb E."/>
            <person name="Caenepeel S."/>
            <person name="Carrano A.V."/>
            <person name="Caoile C."/>
            <person name="Chan Y.M."/>
            <person name="Christensen M."/>
            <person name="Cleland C.A."/>
            <person name="Copeland A."/>
            <person name="Dalin E."/>
            <person name="Dehal P."/>
            <person name="Denys M."/>
            <person name="Detter J.C."/>
            <person name="Escobar J."/>
            <person name="Flowers D."/>
            <person name="Fotopulos D."/>
            <person name="Garcia C."/>
            <person name="Georgescu A.M."/>
            <person name="Glavina T."/>
            <person name="Gomez M."/>
            <person name="Gonzales E."/>
            <person name="Groza M."/>
            <person name="Hammon N."/>
            <person name="Hawkins T."/>
            <person name="Haydu L."/>
            <person name="Ho I."/>
            <person name="Huang W."/>
            <person name="Israni S."/>
            <person name="Jett J."/>
            <person name="Kadner K."/>
            <person name="Kimball H."/>
            <person name="Kobayashi A."/>
            <person name="Larionov V."/>
            <person name="Leem S.-H."/>
            <person name="Lopez F."/>
            <person name="Lou Y."/>
            <person name="Lowry S."/>
            <person name="Malfatti S."/>
            <person name="Martinez D."/>
            <person name="McCready P.M."/>
            <person name="Medina C."/>
            <person name="Morgan J."/>
            <person name="Nelson K."/>
            <person name="Nolan M."/>
            <person name="Ovcharenko I."/>
            <person name="Pitluck S."/>
            <person name="Pollard M."/>
            <person name="Popkie A.P."/>
            <person name="Predki P."/>
            <person name="Quan G."/>
            <person name="Ramirez L."/>
            <person name="Rash S."/>
            <person name="Retterer J."/>
            <person name="Rodriguez A."/>
            <person name="Rogers S."/>
            <person name="Salamov A."/>
            <person name="Salazar A."/>
            <person name="She X."/>
            <person name="Smith D."/>
            <person name="Slezak T."/>
            <person name="Solovyev V."/>
            <person name="Thayer N."/>
            <person name="Tice H."/>
            <person name="Tsai M."/>
            <person name="Ustaszewska A."/>
            <person name="Vo N."/>
            <person name="Wagner M."/>
            <person name="Wheeler J."/>
            <person name="Wu K."/>
            <person name="Xie G."/>
            <person name="Yang J."/>
            <person name="Dubchak I."/>
            <person name="Furey T.S."/>
            <person name="DeJong P."/>
            <person name="Dickson M."/>
            <person name="Gordon D."/>
            <person name="Eichler E.E."/>
            <person name="Pennacchio L.A."/>
            <person name="Richardson P."/>
            <person name="Stubbs L."/>
            <person name="Rokhsar D.S."/>
            <person name="Myers R.M."/>
            <person name="Rubin E.M."/>
            <person name="Lucas S.M."/>
        </authorList>
    </citation>
    <scope>NUCLEOTIDE SEQUENCE [LARGE SCALE GENOMIC DNA]</scope>
</reference>
<reference key="4">
    <citation type="journal article" date="2004" name="Genome Res.">
        <title>The status, quality, and expansion of the NIH full-length cDNA project: the Mammalian Gene Collection (MGC).</title>
        <authorList>
            <consortium name="The MGC Project Team"/>
        </authorList>
    </citation>
    <scope>NUCLEOTIDE SEQUENCE [LARGE SCALE MRNA] (ISOFORM 1)</scope>
    <scope>VARIANT LEU-23</scope>
    <source>
        <tissue>Brain</tissue>
    </source>
</reference>
<reference key="5">
    <citation type="journal article" date="2003" name="J. Biol. Chem.">
        <title>The subunit composition of the human NADH dehydrogenase obtained by rapid one-step immunopurification.</title>
        <authorList>
            <person name="Murray J."/>
            <person name="Zhang B."/>
            <person name="Taylor S.W."/>
            <person name="Oglesbee D."/>
            <person name="Fahy E."/>
            <person name="Marusich M.F."/>
            <person name="Ghosh S.S."/>
            <person name="Capaldi R.A."/>
        </authorList>
    </citation>
    <scope>IDENTIFICATION IN THE NADH-UBIQUINONE OXIDOREDUCTASE COMPLEX</scope>
    <scope>IDENTIFICATION BY MASS SPECTROMETRY</scope>
    <scope>SUBCELLULAR LOCATION</scope>
</reference>
<reference key="6">
    <citation type="journal article" date="2011" name="BMC Syst. Biol.">
        <title>Initial characterization of the human central proteome.</title>
        <authorList>
            <person name="Burkard T.R."/>
            <person name="Planyavsky M."/>
            <person name="Kaupe I."/>
            <person name="Breitwieser F.P."/>
            <person name="Buerckstuemmer T."/>
            <person name="Bennett K.L."/>
            <person name="Superti-Furga G."/>
            <person name="Colinge J."/>
        </authorList>
    </citation>
    <scope>IDENTIFICATION BY MASS SPECTROMETRY [LARGE SCALE ANALYSIS]</scope>
</reference>
<reference key="7">
    <citation type="journal article" date="2015" name="Proteomics">
        <title>N-terminome analysis of the human mitochondrial proteome.</title>
        <authorList>
            <person name="Vaca Jacome A.S."/>
            <person name="Rabilloud T."/>
            <person name="Schaeffer-Reiss C."/>
            <person name="Rompais M."/>
            <person name="Ayoub D."/>
            <person name="Lane L."/>
            <person name="Bairoch A."/>
            <person name="Van Dorsselaer A."/>
            <person name="Carapito C."/>
        </authorList>
    </citation>
    <scope>IDENTIFICATION BY MASS SPECTROMETRY [LARGE SCALE ANALYSIS]</scope>
</reference>
<reference key="8">
    <citation type="journal article" date="2016" name="J. Biol. Chem.">
        <title>NDUFAF5 hydroxylates NDUFS7 at an early stage in the assembly of human complex I.</title>
        <authorList>
            <person name="Rhein V.F."/>
            <person name="Carroll J."/>
            <person name="Ding S."/>
            <person name="Fearnley I.M."/>
            <person name="Walker J.E."/>
        </authorList>
    </citation>
    <scope>HYDROXYLATION AT ARG-111</scope>
    <scope>IDENTIFICATION BY MASS SPECTROMETRY</scope>
</reference>
<reference key="9">
    <citation type="journal article" date="1999" name="Ann. Neurol.">
        <title>Leigh syndrome associated with a mutation in the NDUFS7 (PSST) nuclear encoded subunit of complex I.</title>
        <authorList>
            <person name="Triepels R.H."/>
            <person name="van den Heuvel L."/>
            <person name="Loeffen J.L.C.M."/>
            <person name="Buskens C.A.F."/>
            <person name="Smeets R.J.P."/>
            <person name="Rubio Gozalbo M.E."/>
            <person name="Budde S.M."/>
            <person name="Mariman E.C.M."/>
            <person name="Wijburg F.A."/>
            <person name="Barth P.G."/>
            <person name="Trijbels J.M.F."/>
            <person name="Smeitink J.A.M."/>
        </authorList>
    </citation>
    <scope>INVOLVEMENT IN MC1DN3</scope>
    <scope>VARIANT MC1DN3 MET-122</scope>
</reference>
<reference key="10">
    <citation type="journal article" date="1999" name="Am. J. Hum. Genet.">
        <title>Human mitochondrial complex I in health and disease.</title>
        <authorList>
            <person name="Smeitink J."/>
            <person name="van den Heuvel L."/>
        </authorList>
    </citation>
    <scope>INVOLVEMENT IN MC1DN3</scope>
    <scope>VARIANT MC1DN3 MET-122</scope>
</reference>
<reference key="11">
    <citation type="journal article" date="2007" name="Mol. Genet. Metab.">
        <title>A novel mutation in the human complex I NDUFS7 subunit associated with Leigh syndrome.</title>
        <authorList>
            <person name="Lebon S."/>
            <person name="Rodriguez D."/>
            <person name="Bridoux D."/>
            <person name="Zerrad A."/>
            <person name="Roetig A."/>
            <person name="Munnich A."/>
            <person name="Legrand A."/>
            <person name="Slama A."/>
        </authorList>
    </citation>
    <scope>VARIANT HIS-145</scope>
    <scope>CHARACTERIZATION OF VARIANT HIS-145</scope>
    <scope>FUNCTION</scope>
    <scope>CATALYTIC ACTIVITY</scope>
</reference>